<comment type="function">
    <text evidence="1">Has a role in spermatogenesis and oogenesis.</text>
</comment>
<comment type="subcellular location">
    <subcellularLocation>
        <location evidence="5">Cell membrane</location>
        <topology evidence="5">Single-pass type I membrane protein</topology>
    </subcellularLocation>
</comment>
<comment type="similarity">
    <text evidence="5">Belongs to the cueball family.</text>
</comment>
<keyword id="KW-1003">Cell membrane</keyword>
<keyword id="KW-0221">Differentiation</keyword>
<keyword id="KW-1015">Disulfide bond</keyword>
<keyword id="KW-0245">EGF-like domain</keyword>
<keyword id="KW-0325">Glycoprotein</keyword>
<keyword id="KW-0472">Membrane</keyword>
<keyword id="KW-0896">Oogenesis</keyword>
<keyword id="KW-1185">Reference proteome</keyword>
<keyword id="KW-0677">Repeat</keyword>
<keyword id="KW-0732">Signal</keyword>
<keyword id="KW-0744">Spermatogenesis</keyword>
<keyword id="KW-0812">Transmembrane</keyword>
<keyword id="KW-1133">Transmembrane helix</keyword>
<proteinExistence type="inferred from homology"/>
<dbReference type="EMBL" id="CH902618">
    <property type="protein sequence ID" value="EDV38895.1"/>
    <property type="molecule type" value="Genomic_DNA"/>
</dbReference>
<dbReference type="SMR" id="B3M8G0"/>
<dbReference type="FunCoup" id="B3M8G0">
    <property type="interactions" value="159"/>
</dbReference>
<dbReference type="STRING" id="7217.B3M8G0"/>
<dbReference type="GlyCosmos" id="B3M8G0">
    <property type="glycosylation" value="6 sites, No reported glycans"/>
</dbReference>
<dbReference type="EnsemblMetazoa" id="FBtr0129731">
    <property type="protein sequence ID" value="FBpp0128223"/>
    <property type="gene ID" value="FBgn0102023"/>
</dbReference>
<dbReference type="EnsemblMetazoa" id="XM_001956053.4">
    <property type="protein sequence ID" value="XP_001956089.1"/>
    <property type="gene ID" value="LOC6507657"/>
</dbReference>
<dbReference type="GeneID" id="6507657"/>
<dbReference type="KEGG" id="dan:6507657"/>
<dbReference type="eggNOG" id="KOG1215">
    <property type="taxonomic scope" value="Eukaryota"/>
</dbReference>
<dbReference type="HOGENOM" id="CLU_026602_0_0_1"/>
<dbReference type="InParanoid" id="B3M8G0"/>
<dbReference type="OMA" id="RCEQNST"/>
<dbReference type="OrthoDB" id="382013at2759"/>
<dbReference type="PhylomeDB" id="B3M8G0"/>
<dbReference type="Proteomes" id="UP000007801">
    <property type="component" value="Unassembled WGS sequence"/>
</dbReference>
<dbReference type="GO" id="GO:0005886">
    <property type="term" value="C:plasma membrane"/>
    <property type="evidence" value="ECO:0007669"/>
    <property type="project" value="UniProtKB-SubCell"/>
</dbReference>
<dbReference type="GO" id="GO:0005509">
    <property type="term" value="F:calcium ion binding"/>
    <property type="evidence" value="ECO:0007669"/>
    <property type="project" value="InterPro"/>
</dbReference>
<dbReference type="GO" id="GO:0042813">
    <property type="term" value="F:Wnt receptor activity"/>
    <property type="evidence" value="ECO:0007669"/>
    <property type="project" value="TreeGrafter"/>
</dbReference>
<dbReference type="GO" id="GO:0017147">
    <property type="term" value="F:Wnt-protein binding"/>
    <property type="evidence" value="ECO:0007669"/>
    <property type="project" value="TreeGrafter"/>
</dbReference>
<dbReference type="GO" id="GO:0060070">
    <property type="term" value="P:canonical Wnt signaling pathway"/>
    <property type="evidence" value="ECO:0007669"/>
    <property type="project" value="TreeGrafter"/>
</dbReference>
<dbReference type="GO" id="GO:0048477">
    <property type="term" value="P:oogenesis"/>
    <property type="evidence" value="ECO:0007669"/>
    <property type="project" value="UniProtKB-KW"/>
</dbReference>
<dbReference type="GO" id="GO:0045938">
    <property type="term" value="P:positive regulation of circadian sleep/wake cycle, sleep"/>
    <property type="evidence" value="ECO:0007669"/>
    <property type="project" value="EnsemblMetazoa"/>
</dbReference>
<dbReference type="GO" id="GO:0007283">
    <property type="term" value="P:spermatogenesis"/>
    <property type="evidence" value="ECO:0007669"/>
    <property type="project" value="UniProtKB-KW"/>
</dbReference>
<dbReference type="GO" id="GO:0070328">
    <property type="term" value="P:triglyceride homeostasis"/>
    <property type="evidence" value="ECO:0007669"/>
    <property type="project" value="EnsemblMetazoa"/>
</dbReference>
<dbReference type="Gene3D" id="2.10.25.10">
    <property type="entry name" value="Laminin"/>
    <property type="match status" value="3"/>
</dbReference>
<dbReference type="Gene3D" id="2.120.10.30">
    <property type="entry name" value="TolB, C-terminal domain"/>
    <property type="match status" value="1"/>
</dbReference>
<dbReference type="InterPro" id="IPR011042">
    <property type="entry name" value="6-blade_b-propeller_TolB-like"/>
</dbReference>
<dbReference type="InterPro" id="IPR050778">
    <property type="entry name" value="Cueball_EGF_LRP_Nidogen"/>
</dbReference>
<dbReference type="InterPro" id="IPR001881">
    <property type="entry name" value="EGF-like_Ca-bd_dom"/>
</dbReference>
<dbReference type="InterPro" id="IPR000742">
    <property type="entry name" value="EGF-like_dom"/>
</dbReference>
<dbReference type="InterPro" id="IPR000033">
    <property type="entry name" value="LDLR_classB_rpt"/>
</dbReference>
<dbReference type="PANTHER" id="PTHR46513:SF42">
    <property type="entry name" value="PROTEIN CUEBALL"/>
    <property type="match status" value="1"/>
</dbReference>
<dbReference type="PANTHER" id="PTHR46513">
    <property type="entry name" value="VITELLOGENIN RECEPTOR-LIKE PROTEIN-RELATED-RELATED"/>
    <property type="match status" value="1"/>
</dbReference>
<dbReference type="Pfam" id="PF00058">
    <property type="entry name" value="Ldl_recept_b"/>
    <property type="match status" value="1"/>
</dbReference>
<dbReference type="SMART" id="SM00181">
    <property type="entry name" value="EGF"/>
    <property type="match status" value="3"/>
</dbReference>
<dbReference type="SMART" id="SM00179">
    <property type="entry name" value="EGF_CA"/>
    <property type="match status" value="1"/>
</dbReference>
<dbReference type="SMART" id="SM00135">
    <property type="entry name" value="LY"/>
    <property type="match status" value="3"/>
</dbReference>
<dbReference type="SUPFAM" id="SSF57196">
    <property type="entry name" value="EGF/Laminin"/>
    <property type="match status" value="2"/>
</dbReference>
<dbReference type="SUPFAM" id="SSF63825">
    <property type="entry name" value="YWTD domain"/>
    <property type="match status" value="1"/>
</dbReference>
<dbReference type="PROSITE" id="PS00022">
    <property type="entry name" value="EGF_1"/>
    <property type="match status" value="3"/>
</dbReference>
<dbReference type="PROSITE" id="PS01186">
    <property type="entry name" value="EGF_2"/>
    <property type="match status" value="2"/>
</dbReference>
<dbReference type="PROSITE" id="PS50026">
    <property type="entry name" value="EGF_3"/>
    <property type="match status" value="3"/>
</dbReference>
<dbReference type="PROSITE" id="PS51120">
    <property type="entry name" value="LDLRB"/>
    <property type="match status" value="3"/>
</dbReference>
<sequence>MMIWVPALIFLSACLLPRSNGTPLEWDFAVTLRTKIQFLDSSWQTIATAAHEFDELSALTFDESEELIYFNDRQHQNGSIFSLRRDAYAASHVAQQAIQRTGNESVGGLAYDPLNRNLFWSDTLQRKIFFASIDSPPSQPPKVLVDLSQEGARPEGVAVDICRRKLYWTNSNITHPTVERIDVDGSNRVIIADSDIDMPKGIVVDQLSDRLFWIDDLKGVFFAVMSSNLDGSDRQVVLKDKHHEPQNLALTNDAIFWTDRTTKAVWSHPKRAAVKATTTVRPEVESSTDGTESESKQESEPVEDCPLVRVANLSEEARGIVARTGFYQRLQKDAHCSSIVRKIKLRLDEMSEKKEVRSLVDERMDQLERDHCMNGGSYISKRDLCICPAGFKGSRCEIRECHNYCVHGTCQMSDLAYPKCYCQPGFTGERCEVSNCAGLCLNGGHCRLGETEKDQPSCECPANFAGERCEQNSTQICSLFCRLLKHEPEIHVPFGCHDICEELALDNSTNIAIPQYQHLEVCQTPFVWTSSVIIILVVGIVFSLLLITTIIHGIRRLYKPKRPRIRKTFVVRKQPRTNSAGDTPLTNRPMTAEQCEITIENCCNMNICETPCFDPKLVEQTLAKSSCKEDKKILIHNMEDDLY</sequence>
<accession>B3M8G0</accession>
<organism>
    <name type="scientific">Drosophila ananassae</name>
    <name type="common">Fruit fly</name>
    <dbReference type="NCBI Taxonomy" id="7217"/>
    <lineage>
        <taxon>Eukaryota</taxon>
        <taxon>Metazoa</taxon>
        <taxon>Ecdysozoa</taxon>
        <taxon>Arthropoda</taxon>
        <taxon>Hexapoda</taxon>
        <taxon>Insecta</taxon>
        <taxon>Pterygota</taxon>
        <taxon>Neoptera</taxon>
        <taxon>Endopterygota</taxon>
        <taxon>Diptera</taxon>
        <taxon>Brachycera</taxon>
        <taxon>Muscomorpha</taxon>
        <taxon>Ephydroidea</taxon>
        <taxon>Drosophilidae</taxon>
        <taxon>Drosophila</taxon>
        <taxon>Sophophora</taxon>
    </lineage>
</organism>
<reference evidence="6" key="1">
    <citation type="journal article" date="2007" name="Nature">
        <title>Evolution of genes and genomes on the Drosophila phylogeny.</title>
        <authorList>
            <consortium name="Drosophila 12 genomes consortium"/>
        </authorList>
    </citation>
    <scope>NUCLEOTIDE SEQUENCE [LARGE SCALE GENOMIC DNA]</scope>
    <source>
        <strain evidence="6">Tucson 14024-0371.13</strain>
    </source>
</reference>
<gene>
    <name evidence="1" type="primary">cue</name>
    <name type="ORF">GF25031</name>
</gene>
<evidence type="ECO:0000250" key="1">
    <source>
        <dbReference type="UniProtKB" id="Q95RU0"/>
    </source>
</evidence>
<evidence type="ECO:0000255" key="2"/>
<evidence type="ECO:0000255" key="3">
    <source>
        <dbReference type="PROSITE-ProRule" id="PRU00076"/>
    </source>
</evidence>
<evidence type="ECO:0000256" key="4">
    <source>
        <dbReference type="SAM" id="MobiDB-lite"/>
    </source>
</evidence>
<evidence type="ECO:0000305" key="5"/>
<evidence type="ECO:0000312" key="6">
    <source>
        <dbReference type="EMBL" id="EDV38895.1"/>
    </source>
</evidence>
<protein>
    <recommendedName>
        <fullName evidence="1">Protein cueball</fullName>
    </recommendedName>
</protein>
<feature type="signal peptide" evidence="2">
    <location>
        <begin position="1"/>
        <end position="21"/>
    </location>
</feature>
<feature type="chain" id="PRO_0000386569" description="Protein cueball" evidence="2">
    <location>
        <begin position="22"/>
        <end position="643"/>
    </location>
</feature>
<feature type="topological domain" description="Extracellular" evidence="2">
    <location>
        <begin position="22"/>
        <end position="530"/>
    </location>
</feature>
<feature type="transmembrane region" description="Helical" evidence="2">
    <location>
        <begin position="531"/>
        <end position="551"/>
    </location>
</feature>
<feature type="topological domain" description="Cytoplasmic" evidence="2">
    <location>
        <begin position="552"/>
        <end position="643"/>
    </location>
</feature>
<feature type="repeat" description="LDL-receptor class B 1" evidence="2">
    <location>
        <begin position="116"/>
        <end position="163"/>
    </location>
</feature>
<feature type="repeat" description="LDL-receptor class B 2" evidence="2">
    <location>
        <begin position="164"/>
        <end position="208"/>
    </location>
</feature>
<feature type="repeat" description="LDL-receptor class B 3" evidence="2">
    <location>
        <begin position="209"/>
        <end position="254"/>
    </location>
</feature>
<feature type="domain" description="EGF-like 1" evidence="3">
    <location>
        <begin position="363"/>
        <end position="397"/>
    </location>
</feature>
<feature type="domain" description="EGF-like 2" evidence="3">
    <location>
        <begin position="398"/>
        <end position="429"/>
    </location>
</feature>
<feature type="domain" description="EGF-like 3" evidence="3">
    <location>
        <begin position="432"/>
        <end position="470"/>
    </location>
</feature>
<feature type="region of interest" description="Disordered" evidence="4">
    <location>
        <begin position="276"/>
        <end position="303"/>
    </location>
</feature>
<feature type="compositionally biased region" description="Polar residues" evidence="4">
    <location>
        <begin position="276"/>
        <end position="290"/>
    </location>
</feature>
<feature type="glycosylation site" description="N-linked (GlcNAc...) asparagine" evidence="2">
    <location>
        <position position="77"/>
    </location>
</feature>
<feature type="glycosylation site" description="N-linked (GlcNAc...) asparagine" evidence="2">
    <location>
        <position position="103"/>
    </location>
</feature>
<feature type="glycosylation site" description="N-linked (GlcNAc...) asparagine" evidence="2">
    <location>
        <position position="172"/>
    </location>
</feature>
<feature type="glycosylation site" description="N-linked (GlcNAc...) asparagine" evidence="2">
    <location>
        <position position="312"/>
    </location>
</feature>
<feature type="glycosylation site" description="N-linked (GlcNAc...) asparagine" evidence="2">
    <location>
        <position position="472"/>
    </location>
</feature>
<feature type="glycosylation site" description="N-linked (GlcNAc...) asparagine" evidence="2">
    <location>
        <position position="507"/>
    </location>
</feature>
<feature type="disulfide bond" evidence="3">
    <location>
        <begin position="372"/>
        <end position="385"/>
    </location>
</feature>
<feature type="disulfide bond" evidence="3">
    <location>
        <begin position="387"/>
        <end position="396"/>
    </location>
</feature>
<feature type="disulfide bond" evidence="3">
    <location>
        <begin position="401"/>
        <end position="410"/>
    </location>
</feature>
<feature type="disulfide bond" evidence="3">
    <location>
        <begin position="405"/>
        <end position="420"/>
    </location>
</feature>
<feature type="disulfide bond" evidence="3">
    <location>
        <begin position="436"/>
        <end position="446"/>
    </location>
</feature>
<feature type="disulfide bond" evidence="3">
    <location>
        <begin position="440"/>
        <end position="458"/>
    </location>
</feature>
<feature type="disulfide bond" evidence="3">
    <location>
        <begin position="460"/>
        <end position="469"/>
    </location>
</feature>
<name>CUE_DROAN</name>